<evidence type="ECO:0000255" key="1">
    <source>
        <dbReference type="HAMAP-Rule" id="MF_01954"/>
    </source>
</evidence>
<name>URE2_BURP6</name>
<keyword id="KW-0963">Cytoplasm</keyword>
<keyword id="KW-0378">Hydrolase</keyword>
<comment type="catalytic activity">
    <reaction evidence="1">
        <text>urea + 2 H2O + H(+) = hydrogencarbonate + 2 NH4(+)</text>
        <dbReference type="Rhea" id="RHEA:20557"/>
        <dbReference type="ChEBI" id="CHEBI:15377"/>
        <dbReference type="ChEBI" id="CHEBI:15378"/>
        <dbReference type="ChEBI" id="CHEBI:16199"/>
        <dbReference type="ChEBI" id="CHEBI:17544"/>
        <dbReference type="ChEBI" id="CHEBI:28938"/>
        <dbReference type="EC" id="3.5.1.5"/>
    </reaction>
</comment>
<comment type="pathway">
    <text evidence="1">Nitrogen metabolism; urea degradation; CO(2) and NH(3) from urea (urease route): step 1/1.</text>
</comment>
<comment type="subunit">
    <text evidence="1">Heterotrimer of UreA (gamma), UreB (beta) and UreC (alpha) subunits. Three heterotrimers associate to form the active enzyme.</text>
</comment>
<comment type="subcellular location">
    <subcellularLocation>
        <location evidence="1">Cytoplasm</location>
    </subcellularLocation>
</comment>
<comment type="similarity">
    <text evidence="1">Belongs to the urease beta subunit family.</text>
</comment>
<feature type="chain" id="PRO_1000070726" description="Urease subunit beta">
    <location>
        <begin position="1"/>
        <end position="101"/>
    </location>
</feature>
<dbReference type="EC" id="3.5.1.5" evidence="1"/>
<dbReference type="EMBL" id="CP000570">
    <property type="protein sequence ID" value="ABN84644.1"/>
    <property type="molecule type" value="Genomic_DNA"/>
</dbReference>
<dbReference type="RefSeq" id="WP_011852078.1">
    <property type="nucleotide sequence ID" value="NC_009074.1"/>
</dbReference>
<dbReference type="SMR" id="A3NCL6"/>
<dbReference type="KEGG" id="bpd:BURPS668_3075"/>
<dbReference type="HOGENOM" id="CLU_129707_1_1_4"/>
<dbReference type="UniPathway" id="UPA00258">
    <property type="reaction ID" value="UER00370"/>
</dbReference>
<dbReference type="GO" id="GO:0035550">
    <property type="term" value="C:urease complex"/>
    <property type="evidence" value="ECO:0007669"/>
    <property type="project" value="InterPro"/>
</dbReference>
<dbReference type="GO" id="GO:0009039">
    <property type="term" value="F:urease activity"/>
    <property type="evidence" value="ECO:0007669"/>
    <property type="project" value="UniProtKB-UniRule"/>
</dbReference>
<dbReference type="GO" id="GO:0043419">
    <property type="term" value="P:urea catabolic process"/>
    <property type="evidence" value="ECO:0007669"/>
    <property type="project" value="UniProtKB-UniRule"/>
</dbReference>
<dbReference type="CDD" id="cd00407">
    <property type="entry name" value="Urease_beta"/>
    <property type="match status" value="1"/>
</dbReference>
<dbReference type="FunFam" id="2.10.150.10:FF:000001">
    <property type="entry name" value="Urease subunit beta"/>
    <property type="match status" value="1"/>
</dbReference>
<dbReference type="Gene3D" id="2.10.150.10">
    <property type="entry name" value="Urease, beta subunit"/>
    <property type="match status" value="1"/>
</dbReference>
<dbReference type="HAMAP" id="MF_01954">
    <property type="entry name" value="Urease_beta"/>
    <property type="match status" value="1"/>
</dbReference>
<dbReference type="InterPro" id="IPR002019">
    <property type="entry name" value="Urease_beta-like"/>
</dbReference>
<dbReference type="InterPro" id="IPR036461">
    <property type="entry name" value="Urease_betasu_sf"/>
</dbReference>
<dbReference type="InterPro" id="IPR050069">
    <property type="entry name" value="Urease_subunit"/>
</dbReference>
<dbReference type="NCBIfam" id="NF009682">
    <property type="entry name" value="PRK13203.1"/>
    <property type="match status" value="1"/>
</dbReference>
<dbReference type="NCBIfam" id="TIGR00192">
    <property type="entry name" value="urease_beta"/>
    <property type="match status" value="1"/>
</dbReference>
<dbReference type="PANTHER" id="PTHR33569">
    <property type="entry name" value="UREASE"/>
    <property type="match status" value="1"/>
</dbReference>
<dbReference type="PANTHER" id="PTHR33569:SF1">
    <property type="entry name" value="UREASE"/>
    <property type="match status" value="1"/>
</dbReference>
<dbReference type="Pfam" id="PF00699">
    <property type="entry name" value="Urease_beta"/>
    <property type="match status" value="1"/>
</dbReference>
<dbReference type="SUPFAM" id="SSF51278">
    <property type="entry name" value="Urease, beta-subunit"/>
    <property type="match status" value="1"/>
</dbReference>
<protein>
    <recommendedName>
        <fullName evidence="1">Urease subunit beta</fullName>
        <ecNumber evidence="1">3.5.1.5</ecNumber>
    </recommendedName>
    <alternativeName>
        <fullName evidence="1">Urea amidohydrolase subunit beta</fullName>
    </alternativeName>
</protein>
<organism>
    <name type="scientific">Burkholderia pseudomallei (strain 668)</name>
    <dbReference type="NCBI Taxonomy" id="320373"/>
    <lineage>
        <taxon>Bacteria</taxon>
        <taxon>Pseudomonadati</taxon>
        <taxon>Pseudomonadota</taxon>
        <taxon>Betaproteobacteria</taxon>
        <taxon>Burkholderiales</taxon>
        <taxon>Burkholderiaceae</taxon>
        <taxon>Burkholderia</taxon>
        <taxon>pseudomallei group</taxon>
    </lineage>
</organism>
<accession>A3NCL6</accession>
<reference key="1">
    <citation type="journal article" date="2010" name="Genome Biol. Evol.">
        <title>Continuing evolution of Burkholderia mallei through genome reduction and large-scale rearrangements.</title>
        <authorList>
            <person name="Losada L."/>
            <person name="Ronning C.M."/>
            <person name="DeShazer D."/>
            <person name="Woods D."/>
            <person name="Fedorova N."/>
            <person name="Kim H.S."/>
            <person name="Shabalina S.A."/>
            <person name="Pearson T.R."/>
            <person name="Brinkac L."/>
            <person name="Tan P."/>
            <person name="Nandi T."/>
            <person name="Crabtree J."/>
            <person name="Badger J."/>
            <person name="Beckstrom-Sternberg S."/>
            <person name="Saqib M."/>
            <person name="Schutzer S.E."/>
            <person name="Keim P."/>
            <person name="Nierman W.C."/>
        </authorList>
    </citation>
    <scope>NUCLEOTIDE SEQUENCE [LARGE SCALE GENOMIC DNA]</scope>
    <source>
        <strain>668</strain>
    </source>
</reference>
<sequence>MIPGELVIDDGEHTLNAGRHTIALVVANTGDRPVQVGSHYHFHEVNDALSFDRAAARGFRLNIAAGTAVRFEPGQTRTIELVELGGARAVYGFQGKVMGPL</sequence>
<proteinExistence type="inferred from homology"/>
<gene>
    <name evidence="1" type="primary">ureB</name>
    <name type="ordered locus">BURPS668_3075</name>
</gene>